<name>MUTS_PETMO</name>
<proteinExistence type="inferred from homology"/>
<dbReference type="EMBL" id="CP000879">
    <property type="protein sequence ID" value="ABX31726.1"/>
    <property type="molecule type" value="Genomic_DNA"/>
</dbReference>
<dbReference type="RefSeq" id="WP_012208829.1">
    <property type="nucleotide sequence ID" value="NC_010003.1"/>
</dbReference>
<dbReference type="SMR" id="A9BJY3"/>
<dbReference type="STRING" id="403833.Pmob_1004"/>
<dbReference type="KEGG" id="pmo:Pmob_1004"/>
<dbReference type="eggNOG" id="COG0249">
    <property type="taxonomic scope" value="Bacteria"/>
</dbReference>
<dbReference type="HOGENOM" id="CLU_002472_1_3_0"/>
<dbReference type="OrthoDB" id="9802448at2"/>
<dbReference type="Proteomes" id="UP000000789">
    <property type="component" value="Chromosome"/>
</dbReference>
<dbReference type="GO" id="GO:0005829">
    <property type="term" value="C:cytosol"/>
    <property type="evidence" value="ECO:0007669"/>
    <property type="project" value="TreeGrafter"/>
</dbReference>
<dbReference type="GO" id="GO:0005524">
    <property type="term" value="F:ATP binding"/>
    <property type="evidence" value="ECO:0007669"/>
    <property type="project" value="UniProtKB-UniRule"/>
</dbReference>
<dbReference type="GO" id="GO:0140664">
    <property type="term" value="F:ATP-dependent DNA damage sensor activity"/>
    <property type="evidence" value="ECO:0007669"/>
    <property type="project" value="InterPro"/>
</dbReference>
<dbReference type="GO" id="GO:0003684">
    <property type="term" value="F:damaged DNA binding"/>
    <property type="evidence" value="ECO:0007669"/>
    <property type="project" value="UniProtKB-UniRule"/>
</dbReference>
<dbReference type="GO" id="GO:0030983">
    <property type="term" value="F:mismatched DNA binding"/>
    <property type="evidence" value="ECO:0007669"/>
    <property type="project" value="InterPro"/>
</dbReference>
<dbReference type="GO" id="GO:0006298">
    <property type="term" value="P:mismatch repair"/>
    <property type="evidence" value="ECO:0007669"/>
    <property type="project" value="UniProtKB-UniRule"/>
</dbReference>
<dbReference type="CDD" id="cd03284">
    <property type="entry name" value="ABC_MutS1"/>
    <property type="match status" value="1"/>
</dbReference>
<dbReference type="FunFam" id="3.40.1170.10:FF:000001">
    <property type="entry name" value="DNA mismatch repair protein MutS"/>
    <property type="match status" value="1"/>
</dbReference>
<dbReference type="FunFam" id="3.40.50.300:FF:000870">
    <property type="entry name" value="MutS protein homolog 4"/>
    <property type="match status" value="1"/>
</dbReference>
<dbReference type="Gene3D" id="1.10.1420.10">
    <property type="match status" value="2"/>
</dbReference>
<dbReference type="Gene3D" id="3.40.1170.10">
    <property type="entry name" value="DNA repair protein MutS, domain I"/>
    <property type="match status" value="1"/>
</dbReference>
<dbReference type="Gene3D" id="3.30.420.110">
    <property type="entry name" value="MutS, connector domain"/>
    <property type="match status" value="1"/>
</dbReference>
<dbReference type="Gene3D" id="3.40.50.300">
    <property type="entry name" value="P-loop containing nucleotide triphosphate hydrolases"/>
    <property type="match status" value="1"/>
</dbReference>
<dbReference type="HAMAP" id="MF_00096">
    <property type="entry name" value="MutS"/>
    <property type="match status" value="1"/>
</dbReference>
<dbReference type="InterPro" id="IPR005748">
    <property type="entry name" value="DNA_mismatch_repair_MutS"/>
</dbReference>
<dbReference type="InterPro" id="IPR007695">
    <property type="entry name" value="DNA_mismatch_repair_MutS-lik_N"/>
</dbReference>
<dbReference type="InterPro" id="IPR017261">
    <property type="entry name" value="DNA_mismatch_repair_MutS/MSH"/>
</dbReference>
<dbReference type="InterPro" id="IPR000432">
    <property type="entry name" value="DNA_mismatch_repair_MutS_C"/>
</dbReference>
<dbReference type="InterPro" id="IPR007861">
    <property type="entry name" value="DNA_mismatch_repair_MutS_clamp"/>
</dbReference>
<dbReference type="InterPro" id="IPR007696">
    <property type="entry name" value="DNA_mismatch_repair_MutS_core"/>
</dbReference>
<dbReference type="InterPro" id="IPR016151">
    <property type="entry name" value="DNA_mismatch_repair_MutS_N"/>
</dbReference>
<dbReference type="InterPro" id="IPR036187">
    <property type="entry name" value="DNA_mismatch_repair_MutS_sf"/>
</dbReference>
<dbReference type="InterPro" id="IPR007860">
    <property type="entry name" value="DNA_mmatch_repair_MutS_con_dom"/>
</dbReference>
<dbReference type="InterPro" id="IPR045076">
    <property type="entry name" value="MutS"/>
</dbReference>
<dbReference type="InterPro" id="IPR036678">
    <property type="entry name" value="MutS_con_dom_sf"/>
</dbReference>
<dbReference type="InterPro" id="IPR027417">
    <property type="entry name" value="P-loop_NTPase"/>
</dbReference>
<dbReference type="NCBIfam" id="TIGR01070">
    <property type="entry name" value="mutS1"/>
    <property type="match status" value="1"/>
</dbReference>
<dbReference type="NCBIfam" id="NF003810">
    <property type="entry name" value="PRK05399.1"/>
    <property type="match status" value="1"/>
</dbReference>
<dbReference type="PANTHER" id="PTHR11361:SF34">
    <property type="entry name" value="DNA MISMATCH REPAIR PROTEIN MSH1, MITOCHONDRIAL"/>
    <property type="match status" value="1"/>
</dbReference>
<dbReference type="PANTHER" id="PTHR11361">
    <property type="entry name" value="DNA MISMATCH REPAIR PROTEIN MUTS FAMILY MEMBER"/>
    <property type="match status" value="1"/>
</dbReference>
<dbReference type="Pfam" id="PF01624">
    <property type="entry name" value="MutS_I"/>
    <property type="match status" value="1"/>
</dbReference>
<dbReference type="Pfam" id="PF05188">
    <property type="entry name" value="MutS_II"/>
    <property type="match status" value="1"/>
</dbReference>
<dbReference type="Pfam" id="PF05192">
    <property type="entry name" value="MutS_III"/>
    <property type="match status" value="1"/>
</dbReference>
<dbReference type="Pfam" id="PF05190">
    <property type="entry name" value="MutS_IV"/>
    <property type="match status" value="1"/>
</dbReference>
<dbReference type="Pfam" id="PF00488">
    <property type="entry name" value="MutS_V"/>
    <property type="match status" value="1"/>
</dbReference>
<dbReference type="PIRSF" id="PIRSF037677">
    <property type="entry name" value="DNA_mis_repair_Msh6"/>
    <property type="match status" value="1"/>
</dbReference>
<dbReference type="SMART" id="SM00534">
    <property type="entry name" value="MUTSac"/>
    <property type="match status" value="1"/>
</dbReference>
<dbReference type="SMART" id="SM00533">
    <property type="entry name" value="MUTSd"/>
    <property type="match status" value="1"/>
</dbReference>
<dbReference type="SUPFAM" id="SSF55271">
    <property type="entry name" value="DNA repair protein MutS, domain I"/>
    <property type="match status" value="1"/>
</dbReference>
<dbReference type="SUPFAM" id="SSF53150">
    <property type="entry name" value="DNA repair protein MutS, domain II"/>
    <property type="match status" value="1"/>
</dbReference>
<dbReference type="SUPFAM" id="SSF48334">
    <property type="entry name" value="DNA repair protein MutS, domain III"/>
    <property type="match status" value="1"/>
</dbReference>
<dbReference type="SUPFAM" id="SSF52540">
    <property type="entry name" value="P-loop containing nucleoside triphosphate hydrolases"/>
    <property type="match status" value="1"/>
</dbReference>
<dbReference type="PROSITE" id="PS00486">
    <property type="entry name" value="DNA_MISMATCH_REPAIR_2"/>
    <property type="match status" value="1"/>
</dbReference>
<organism>
    <name type="scientific">Petrotoga mobilis (strain DSM 10674 / SJ95)</name>
    <dbReference type="NCBI Taxonomy" id="403833"/>
    <lineage>
        <taxon>Bacteria</taxon>
        <taxon>Thermotogati</taxon>
        <taxon>Thermotogota</taxon>
        <taxon>Thermotogae</taxon>
        <taxon>Petrotogales</taxon>
        <taxon>Petrotogaceae</taxon>
        <taxon>Petrotoga</taxon>
    </lineage>
</organism>
<feature type="chain" id="PRO_0000335194" description="DNA mismatch repair protein MutS">
    <location>
        <begin position="1"/>
        <end position="817"/>
    </location>
</feature>
<feature type="binding site" evidence="1">
    <location>
        <begin position="604"/>
        <end position="611"/>
    </location>
    <ligand>
        <name>ATP</name>
        <dbReference type="ChEBI" id="CHEBI:30616"/>
    </ligand>
</feature>
<reference key="1">
    <citation type="submission" date="2007-11" db="EMBL/GenBank/DDBJ databases">
        <title>Complete sequence of Petroga mobilis SJ95.</title>
        <authorList>
            <consortium name="US DOE Joint Genome Institute"/>
            <person name="Copeland A."/>
            <person name="Lucas S."/>
            <person name="Lapidus A."/>
            <person name="Barry K."/>
            <person name="Glavina del Rio T."/>
            <person name="Dalin E."/>
            <person name="Tice H."/>
            <person name="Pitluck S."/>
            <person name="Meincke L."/>
            <person name="Brettin T."/>
            <person name="Bruce D."/>
            <person name="Detter J.C."/>
            <person name="Han C."/>
            <person name="Kuske C.R."/>
            <person name="Schmutz J."/>
            <person name="Larimer F."/>
            <person name="Land M."/>
            <person name="Hauser L."/>
            <person name="Kyrpides N."/>
            <person name="Mikhailova N."/>
            <person name="Noll K."/>
            <person name="Richardson P."/>
        </authorList>
    </citation>
    <scope>NUCLEOTIDE SEQUENCE [LARGE SCALE GENOMIC DNA]</scope>
    <source>
        <strain>DSM 10674 / SJ95</strain>
    </source>
</reference>
<comment type="function">
    <text evidence="1">This protein is involved in the repair of mismatches in DNA. It is possible that it carries out the mismatch recognition step. This protein has a weak ATPase activity.</text>
</comment>
<comment type="similarity">
    <text evidence="1">Belongs to the DNA mismatch repair MutS family.</text>
</comment>
<keyword id="KW-0067">ATP-binding</keyword>
<keyword id="KW-0227">DNA damage</keyword>
<keyword id="KW-0234">DNA repair</keyword>
<keyword id="KW-0238">DNA-binding</keyword>
<keyword id="KW-0547">Nucleotide-binding</keyword>
<protein>
    <recommendedName>
        <fullName evidence="1">DNA mismatch repair protein MutS</fullName>
    </recommendedName>
</protein>
<accession>A9BJY3</accession>
<sequence length="817" mass="94050">MSDLTPMIKQYLKIKEEYKDSILLFRLGDFYETFFEDAKKVSEILQIVLTKRNGNPMAGIPYHALNNYLKRLLDAGYKVAICEQMEDPQSSKGIVDRKVTRILTPGTIIDEGMLEESNRFAALITKNGNLYKIAIFDFSTGDFYLDSFDFKEDELLDFISSFGLVQILLSKELEQLSKKIKNLTNEIYVEILDEWYFSNNFKDHLKETYEVLSLDHLDYDDDELKVADAVLKYLEVTQFSKIKHMRLPKRFKTKNYMFLDSNTIENLGILPTNSNKGKTLYDILKLTKTSMGNRKLREFILTPLTDKENIEERLNKVEHLVEDPLLLEELKEYLASVKDLERISSRISLMKATPKDLIALKDSLEVVPYIIESLTSNPGLSDFFDGVDVLKEAKEFIENTIIEEPAIAPGNGKVIKEGVSGELDEYRNLFNNLDGVLKDIEKREKEKTKISSLKVGRNKIYGFYIEVSKAQSSKVPDNYVRKQTLVNTERYTIKELEEVEQRLALSEEKIKVIEKDIYDKVLTHLSQYVDKIEKLSNKIAELDVFRSFAEVSRVYNYKRPTFVQNSKEIKIINSRHPVVERFVDEFTPNDLFLSEDKFYIILTGPNMSGKSTFIRQIGLISVMAQIGCFVPAEKAEIPIYDGIFTRIGARDDIVSGKSTFLVEMLEVSTILNKATDNSLVLLDEVGRGTSTLDGISVAWAISEYLFQVKRCNTIFATHYTELTYMSHIYEEVAAKRIKVLETMDGVIFLHKIEDGTSDNSYGIEIARLAGFPIEIIERSKEILSQLSNRVDLESRLKRIKNINKKKYESQENQLKMF</sequence>
<evidence type="ECO:0000255" key="1">
    <source>
        <dbReference type="HAMAP-Rule" id="MF_00096"/>
    </source>
</evidence>
<gene>
    <name evidence="1" type="primary">mutS</name>
    <name type="ordered locus">Pmob_1004</name>
</gene>